<comment type="function">
    <text evidence="1 2">Component of the viral envelope that plays a central role in virus morphogenesis and assembly via its interactions with other viral proteins.</text>
</comment>
<comment type="subunit">
    <text evidence="1 2">Homomultimer. Interacts with envelope E protein in the budding compartment of the host cell, which is located between endoplasmic reticulum and the Golgi complex. Forms a complex with HE and S proteins. Interacts with nucleocapsid N protein. This interaction probably participates in RNA packaging into the virus.</text>
</comment>
<comment type="subcellular location">
    <subcellularLocation>
        <location evidence="1">Virion membrane</location>
        <topology evidence="1">Multi-pass membrane protein</topology>
    </subcellularLocation>
    <subcellularLocation>
        <location evidence="1">Host Golgi apparatus membrane</location>
        <topology evidence="1">Multi-pass membrane protein</topology>
    </subcellularLocation>
    <text evidence="1">Largely embedded in the lipid bilayer.</text>
</comment>
<comment type="similarity">
    <text evidence="1">Belongs to the gammacoronaviruses M protein family.</text>
</comment>
<reference key="1">
    <citation type="submission" date="2000-11" db="EMBL/GenBank/DDBJ databases">
        <title>Sequence analysis of matrix gene of avian infectious bronchitis virus strain D41.</title>
        <authorList>
            <person name="Cao W.S."/>
            <person name="Liao M."/>
            <person name="Ren T."/>
            <person name="Xin C.A."/>
        </authorList>
    </citation>
    <scope>NUCLEOTIDE SEQUENCE [GENOMIC RNA]</scope>
</reference>
<feature type="chain" id="PRO_0000106053" description="Membrane protein">
    <location>
        <begin position="1"/>
        <end position="225"/>
    </location>
</feature>
<feature type="topological domain" description="Virion surface" evidence="1">
    <location>
        <begin position="1"/>
        <end position="20"/>
    </location>
</feature>
<feature type="transmembrane region" description="Helical" evidence="1">
    <location>
        <begin position="21"/>
        <end position="41"/>
    </location>
</feature>
<feature type="topological domain" description="Intravirion" evidence="1">
    <location>
        <begin position="42"/>
        <end position="51"/>
    </location>
</feature>
<feature type="transmembrane region" description="Helical" evidence="1">
    <location>
        <begin position="52"/>
        <end position="72"/>
    </location>
</feature>
<feature type="topological domain" description="Virion surface" evidence="1">
    <location>
        <begin position="73"/>
        <end position="77"/>
    </location>
</feature>
<feature type="transmembrane region" description="Helical" evidence="1">
    <location>
        <begin position="78"/>
        <end position="98"/>
    </location>
</feature>
<feature type="topological domain" description="Intravirion" evidence="1">
    <location>
        <begin position="99"/>
        <end position="225"/>
    </location>
</feature>
<keyword id="KW-0325">Glycoprotein</keyword>
<keyword id="KW-1040">Host Golgi apparatus</keyword>
<keyword id="KW-1043">Host membrane</keyword>
<keyword id="KW-0472">Membrane</keyword>
<keyword id="KW-0812">Transmembrane</keyword>
<keyword id="KW-1133">Transmembrane helix</keyword>
<keyword id="KW-0261">Viral envelope protein</keyword>
<keyword id="KW-0468">Viral matrix protein</keyword>
<keyword id="KW-0946">Virion</keyword>
<gene>
    <name evidence="1" type="primary">M</name>
</gene>
<accession>P69605</accession>
<accession>Q9J4A6</accession>
<proteinExistence type="inferred from homology"/>
<organismHost>
    <name type="scientific">Gallus gallus</name>
    <name type="common">Chicken</name>
    <dbReference type="NCBI Taxonomy" id="9031"/>
</organismHost>
<protein>
    <recommendedName>
        <fullName evidence="1">Membrane protein</fullName>
        <shortName evidence="1">M protein</shortName>
    </recommendedName>
    <alternativeName>
        <fullName evidence="1">E1 glycoprotein</fullName>
    </alternativeName>
    <alternativeName>
        <fullName evidence="1">Matrix glycoprotein</fullName>
    </alternativeName>
    <alternativeName>
        <fullName evidence="1">Membrane glycoprotein</fullName>
    </alternativeName>
</protein>
<organism>
    <name type="scientific">Avian infectious bronchitis virus (strain D41)</name>
    <name type="common">IBV</name>
    <dbReference type="NCBI Taxonomy" id="236988"/>
    <lineage>
        <taxon>Viruses</taxon>
        <taxon>Riboviria</taxon>
        <taxon>Orthornavirae</taxon>
        <taxon>Pisuviricota</taxon>
        <taxon>Pisoniviricetes</taxon>
        <taxon>Nidovirales</taxon>
        <taxon>Cornidovirineae</taxon>
        <taxon>Coronaviridae</taxon>
        <taxon>Orthocoronavirinae</taxon>
        <taxon>Gammacoronavirus</taxon>
        <taxon>Igacovirus</taxon>
        <taxon>Avian coronavirus</taxon>
    </lineage>
</organism>
<name>VME1_IBV41</name>
<evidence type="ECO:0000255" key="1">
    <source>
        <dbReference type="HAMAP-Rule" id="MF_04203"/>
    </source>
</evidence>
<evidence type="ECO:0000255" key="2">
    <source>
        <dbReference type="PROSITE-ProRule" id="PRU01275"/>
    </source>
</evidence>
<sequence>MSNETNCTLDFEQSVELFKEYNLFITAFLLFLTIILQYGYATRSKFIYILKMIVLWCFWPLNIAVGVISCIYPPNTGGLVAAIILTVFACLSFVGYWIQSIRLFKRCRSWWSFNPESNAVGSILLTNGQQCNFAIESVPMVLSPIIKNGVLYCEGQWLAKCEPDHLPKDIFVCTPDRRNIYRMVQKYIGDQSGNKKRFATFVYAKQSVDTGELESVATGGSSLYT</sequence>
<dbReference type="EMBL" id="AF322367">
    <property type="protein sequence ID" value="AAG53976.1"/>
    <property type="molecule type" value="Genomic_RNA"/>
</dbReference>
<dbReference type="SMR" id="P69605"/>
<dbReference type="GO" id="GO:0044178">
    <property type="term" value="C:host cell Golgi membrane"/>
    <property type="evidence" value="ECO:0007669"/>
    <property type="project" value="UniProtKB-SubCell"/>
</dbReference>
<dbReference type="GO" id="GO:0016020">
    <property type="term" value="C:membrane"/>
    <property type="evidence" value="ECO:0007669"/>
    <property type="project" value="UniProtKB-UniRule"/>
</dbReference>
<dbReference type="GO" id="GO:0019031">
    <property type="term" value="C:viral envelope"/>
    <property type="evidence" value="ECO:0007669"/>
    <property type="project" value="UniProtKB-UniRule"/>
</dbReference>
<dbReference type="GO" id="GO:0055036">
    <property type="term" value="C:virion membrane"/>
    <property type="evidence" value="ECO:0007669"/>
    <property type="project" value="UniProtKB-SubCell"/>
</dbReference>
<dbReference type="GO" id="GO:0039660">
    <property type="term" value="F:structural constituent of virion"/>
    <property type="evidence" value="ECO:0007669"/>
    <property type="project" value="UniProtKB-UniRule"/>
</dbReference>
<dbReference type="CDD" id="cd21566">
    <property type="entry name" value="gammaCoV_M"/>
    <property type="match status" value="1"/>
</dbReference>
<dbReference type="HAMAP" id="MF_04203">
    <property type="entry name" value="GAMMA_CORONA_M"/>
    <property type="match status" value="1"/>
</dbReference>
<dbReference type="InterPro" id="IPR042550">
    <property type="entry name" value="GAMMA_CORONA_M"/>
</dbReference>
<dbReference type="InterPro" id="IPR002574">
    <property type="entry name" value="M_CoV"/>
</dbReference>
<dbReference type="Pfam" id="PF01635">
    <property type="entry name" value="CoV_M"/>
    <property type="match status" value="1"/>
</dbReference>
<dbReference type="PROSITE" id="PS51927">
    <property type="entry name" value="COV_M"/>
    <property type="match status" value="1"/>
</dbReference>